<proteinExistence type="inferred from homology"/>
<sequence length="218" mass="23456">MQAIRLGLHTAAAVVTLSISAVSCGTKTPDYQLILSKSSTTTTTTPDKPIPLPQYLESIGVTGQQVAPSSLPGLTVSIPTPPGWSPYSNPNITPETLIIAKSGKYPTARLVAFKLRGDFDPTQVIKHGNDDAQLFENFRQLDVSTANYNGFPSAMIQGSYDLEGRRLHAWNRIVIPTGPPPSKQQYLVQLTITSLANEAVAQSNDIEAIIRGFVVAPK</sequence>
<reference key="1">
    <citation type="journal article" date="2001" name="Nature">
        <title>Massive gene decay in the leprosy bacillus.</title>
        <authorList>
            <person name="Cole S.T."/>
            <person name="Eiglmeier K."/>
            <person name="Parkhill J."/>
            <person name="James K.D."/>
            <person name="Thomson N.R."/>
            <person name="Wheeler P.R."/>
            <person name="Honore N."/>
            <person name="Garnier T."/>
            <person name="Churcher C.M."/>
            <person name="Harris D.E."/>
            <person name="Mungall K.L."/>
            <person name="Basham D."/>
            <person name="Brown D."/>
            <person name="Chillingworth T."/>
            <person name="Connor R."/>
            <person name="Davies R.M."/>
            <person name="Devlin K."/>
            <person name="Duthoy S."/>
            <person name="Feltwell T."/>
            <person name="Fraser A."/>
            <person name="Hamlin N."/>
            <person name="Holroyd S."/>
            <person name="Hornsby T."/>
            <person name="Jagels K."/>
            <person name="Lacroix C."/>
            <person name="Maclean J."/>
            <person name="Moule S."/>
            <person name="Murphy L.D."/>
            <person name="Oliver K."/>
            <person name="Quail M.A."/>
            <person name="Rajandream M.A."/>
            <person name="Rutherford K.M."/>
            <person name="Rutter S."/>
            <person name="Seeger K."/>
            <person name="Simon S."/>
            <person name="Simmonds M."/>
            <person name="Skelton J."/>
            <person name="Squares R."/>
            <person name="Squares S."/>
            <person name="Stevens K."/>
            <person name="Taylor K."/>
            <person name="Whitehead S."/>
            <person name="Woodward J.R."/>
            <person name="Barrell B.G."/>
        </authorList>
    </citation>
    <scope>NUCLEOTIDE SEQUENCE [LARGE SCALE GENOMIC DNA]</scope>
    <source>
        <strain>TN</strain>
    </source>
</reference>
<name>LPQT_MYCLE</name>
<evidence type="ECO:0000255" key="1">
    <source>
        <dbReference type="PROSITE-ProRule" id="PRU00303"/>
    </source>
</evidence>
<protein>
    <recommendedName>
        <fullName>Putative lipoprotein LpqT</fullName>
    </recommendedName>
</protein>
<feature type="signal peptide" evidence="1">
    <location>
        <begin position="1"/>
        <end position="23"/>
    </location>
</feature>
<feature type="chain" id="PRO_0000018130" description="Putative lipoprotein LpqT">
    <location>
        <begin position="24"/>
        <end position="218"/>
    </location>
</feature>
<feature type="lipid moiety-binding region" description="N-palmitoyl cysteine" evidence="1">
    <location>
        <position position="24"/>
    </location>
</feature>
<feature type="lipid moiety-binding region" description="S-diacylglycerol cysteine" evidence="1">
    <location>
        <position position="24"/>
    </location>
</feature>
<gene>
    <name type="primary">lpqT</name>
    <name type="ordered locus">ML0246</name>
</gene>
<dbReference type="EMBL" id="AL583917">
    <property type="protein sequence ID" value="CAC29754.1"/>
    <property type="molecule type" value="Genomic_DNA"/>
</dbReference>
<dbReference type="PIR" id="F86939">
    <property type="entry name" value="F86939"/>
</dbReference>
<dbReference type="RefSeq" id="NP_301305.1">
    <property type="nucleotide sequence ID" value="NC_002677.1"/>
</dbReference>
<dbReference type="RefSeq" id="WP_010907629.1">
    <property type="nucleotide sequence ID" value="NC_002677.1"/>
</dbReference>
<dbReference type="SMR" id="Q9CD47"/>
<dbReference type="STRING" id="272631.gene:17574063"/>
<dbReference type="KEGG" id="mle:ML0246"/>
<dbReference type="PATRIC" id="fig|272631.5.peg.382"/>
<dbReference type="Leproma" id="ML0246"/>
<dbReference type="eggNOG" id="ENOG5031CXX">
    <property type="taxonomic scope" value="Bacteria"/>
</dbReference>
<dbReference type="HOGENOM" id="CLU_101788_0_0_11"/>
<dbReference type="OrthoDB" id="4749152at2"/>
<dbReference type="Proteomes" id="UP000000806">
    <property type="component" value="Chromosome"/>
</dbReference>
<dbReference type="GO" id="GO:0005886">
    <property type="term" value="C:plasma membrane"/>
    <property type="evidence" value="ECO:0007669"/>
    <property type="project" value="UniProtKB-SubCell"/>
</dbReference>
<dbReference type="Gene3D" id="3.40.1000.10">
    <property type="entry name" value="Mog1/PsbP, alpha/beta/alpha sandwich"/>
    <property type="match status" value="1"/>
</dbReference>
<dbReference type="InterPro" id="IPR019674">
    <property type="entry name" value="Lipoprotein_LpqN/LpqT-like"/>
</dbReference>
<dbReference type="Pfam" id="PF10738">
    <property type="entry name" value="Lpp-LpqN"/>
    <property type="match status" value="1"/>
</dbReference>
<dbReference type="PROSITE" id="PS51257">
    <property type="entry name" value="PROKAR_LIPOPROTEIN"/>
    <property type="match status" value="1"/>
</dbReference>
<comment type="subcellular location">
    <subcellularLocation>
        <location evidence="1">Cell membrane</location>
        <topology evidence="1">Lipid-anchor</topology>
    </subcellularLocation>
</comment>
<keyword id="KW-1003">Cell membrane</keyword>
<keyword id="KW-0449">Lipoprotein</keyword>
<keyword id="KW-0472">Membrane</keyword>
<keyword id="KW-0564">Palmitate</keyword>
<keyword id="KW-1185">Reference proteome</keyword>
<keyword id="KW-0732">Signal</keyword>
<accession>Q9CD47</accession>
<organism>
    <name type="scientific">Mycobacterium leprae (strain TN)</name>
    <dbReference type="NCBI Taxonomy" id="272631"/>
    <lineage>
        <taxon>Bacteria</taxon>
        <taxon>Bacillati</taxon>
        <taxon>Actinomycetota</taxon>
        <taxon>Actinomycetes</taxon>
        <taxon>Mycobacteriales</taxon>
        <taxon>Mycobacteriaceae</taxon>
        <taxon>Mycobacterium</taxon>
    </lineage>
</organism>